<dbReference type="EC" id="3.6.1.-" evidence="1"/>
<dbReference type="EMBL" id="AP009178">
    <property type="protein sequence ID" value="BAF70250.1"/>
    <property type="molecule type" value="Genomic_DNA"/>
</dbReference>
<dbReference type="RefSeq" id="WP_012082513.1">
    <property type="nucleotide sequence ID" value="NC_009662.1"/>
</dbReference>
<dbReference type="SMR" id="A6Q441"/>
<dbReference type="FunCoup" id="A6Q441">
    <property type="interactions" value="202"/>
</dbReference>
<dbReference type="STRING" id="387092.NIS_1141"/>
<dbReference type="KEGG" id="nis:NIS_1141"/>
<dbReference type="eggNOG" id="COG0494">
    <property type="taxonomic scope" value="Bacteria"/>
</dbReference>
<dbReference type="HOGENOM" id="CLU_087195_3_0_7"/>
<dbReference type="InParanoid" id="A6Q441"/>
<dbReference type="OrthoDB" id="9810648at2"/>
<dbReference type="Proteomes" id="UP000001118">
    <property type="component" value="Chromosome"/>
</dbReference>
<dbReference type="GO" id="GO:0034432">
    <property type="term" value="F:bis(5'-adenosyl)-pentaphosphatase activity"/>
    <property type="evidence" value="ECO:0007669"/>
    <property type="project" value="TreeGrafter"/>
</dbReference>
<dbReference type="GO" id="GO:0008893">
    <property type="term" value="F:guanosine-3',5'-bis(diphosphate) 3'-diphosphatase activity"/>
    <property type="evidence" value="ECO:0007669"/>
    <property type="project" value="TreeGrafter"/>
</dbReference>
<dbReference type="GO" id="GO:0006753">
    <property type="term" value="P:nucleoside phosphate metabolic process"/>
    <property type="evidence" value="ECO:0007669"/>
    <property type="project" value="TreeGrafter"/>
</dbReference>
<dbReference type="GO" id="GO:0019693">
    <property type="term" value="P:ribose phosphate metabolic process"/>
    <property type="evidence" value="ECO:0007669"/>
    <property type="project" value="TreeGrafter"/>
</dbReference>
<dbReference type="CDD" id="cd03671">
    <property type="entry name" value="NUDIX_Ap4A_hydrolase_plant_like"/>
    <property type="match status" value="1"/>
</dbReference>
<dbReference type="Gene3D" id="3.90.79.10">
    <property type="entry name" value="Nucleoside Triphosphate Pyrophosphohydrolase"/>
    <property type="match status" value="1"/>
</dbReference>
<dbReference type="HAMAP" id="MF_00298">
    <property type="entry name" value="Nudix_RppH"/>
    <property type="match status" value="1"/>
</dbReference>
<dbReference type="InterPro" id="IPR020476">
    <property type="entry name" value="Nudix_hydrolase"/>
</dbReference>
<dbReference type="InterPro" id="IPR015797">
    <property type="entry name" value="NUDIX_hydrolase-like_dom_sf"/>
</dbReference>
<dbReference type="InterPro" id="IPR020084">
    <property type="entry name" value="NUDIX_hydrolase_CS"/>
</dbReference>
<dbReference type="InterPro" id="IPR000086">
    <property type="entry name" value="NUDIX_hydrolase_dom"/>
</dbReference>
<dbReference type="InterPro" id="IPR022927">
    <property type="entry name" value="RppH"/>
</dbReference>
<dbReference type="NCBIfam" id="NF001936">
    <property type="entry name" value="PRK00714.1-3"/>
    <property type="match status" value="1"/>
</dbReference>
<dbReference type="NCBIfam" id="NF001938">
    <property type="entry name" value="PRK00714.1-5"/>
    <property type="match status" value="1"/>
</dbReference>
<dbReference type="PANTHER" id="PTHR11839:SF22">
    <property type="entry name" value="NUDIX HYDROLASE 26, CHLOROPLASTIC"/>
    <property type="match status" value="1"/>
</dbReference>
<dbReference type="PANTHER" id="PTHR11839">
    <property type="entry name" value="UDP/ADP-SUGAR PYROPHOSPHATASE"/>
    <property type="match status" value="1"/>
</dbReference>
<dbReference type="Pfam" id="PF00293">
    <property type="entry name" value="NUDIX"/>
    <property type="match status" value="1"/>
</dbReference>
<dbReference type="PRINTS" id="PR00502">
    <property type="entry name" value="NUDIXFAMILY"/>
</dbReference>
<dbReference type="SUPFAM" id="SSF55811">
    <property type="entry name" value="Nudix"/>
    <property type="match status" value="1"/>
</dbReference>
<dbReference type="PROSITE" id="PS51462">
    <property type="entry name" value="NUDIX"/>
    <property type="match status" value="1"/>
</dbReference>
<dbReference type="PROSITE" id="PS00893">
    <property type="entry name" value="NUDIX_BOX"/>
    <property type="match status" value="1"/>
</dbReference>
<evidence type="ECO:0000255" key="1">
    <source>
        <dbReference type="HAMAP-Rule" id="MF_00298"/>
    </source>
</evidence>
<comment type="function">
    <text evidence="1">Accelerates the degradation of transcripts by removing pyrophosphate from the 5'-end of triphosphorylated RNA, leading to a more labile monophosphorylated state that can stimulate subsequent ribonuclease cleavage.</text>
</comment>
<comment type="cofactor">
    <cofactor evidence="1">
        <name>a divalent metal cation</name>
        <dbReference type="ChEBI" id="CHEBI:60240"/>
    </cofactor>
</comment>
<comment type="similarity">
    <text evidence="1">Belongs to the Nudix hydrolase family. RppH subfamily.</text>
</comment>
<gene>
    <name evidence="1" type="primary">rppH</name>
    <name evidence="1" type="synonym">nudH</name>
    <name type="ordered locus">NIS_1141</name>
</gene>
<reference key="1">
    <citation type="journal article" date="2007" name="Proc. Natl. Acad. Sci. U.S.A.">
        <title>Deep-sea vent epsilon-proteobacterial genomes provide insights into emergence of pathogens.</title>
        <authorList>
            <person name="Nakagawa S."/>
            <person name="Takaki Y."/>
            <person name="Shimamura S."/>
            <person name="Reysenbach A.-L."/>
            <person name="Takai K."/>
            <person name="Horikoshi K."/>
        </authorList>
    </citation>
    <scope>NUCLEOTIDE SEQUENCE [LARGE SCALE GENOMIC DNA]</scope>
    <source>
        <strain>SB155-2</strain>
    </source>
</reference>
<organism>
    <name type="scientific">Nitratiruptor sp. (strain SB155-2)</name>
    <dbReference type="NCBI Taxonomy" id="387092"/>
    <lineage>
        <taxon>Bacteria</taxon>
        <taxon>Pseudomonadati</taxon>
        <taxon>Campylobacterota</taxon>
        <taxon>Epsilonproteobacteria</taxon>
        <taxon>Nautiliales</taxon>
        <taxon>Nitratiruptoraceae</taxon>
        <taxon>Nitratiruptor</taxon>
    </lineage>
</organism>
<keyword id="KW-0378">Hydrolase</keyword>
<keyword id="KW-1185">Reference proteome</keyword>
<feature type="chain" id="PRO_1000021965" description="RNA pyrophosphohydrolase">
    <location>
        <begin position="1"/>
        <end position="155"/>
    </location>
</feature>
<feature type="domain" description="Nudix hydrolase" evidence="1">
    <location>
        <begin position="5"/>
        <end position="147"/>
    </location>
</feature>
<feature type="short sequence motif" description="Nudix box">
    <location>
        <begin position="42"/>
        <end position="63"/>
    </location>
</feature>
<sequence>MEKKRYRPNVAAIVLSSNYPKKVEFFIAARSDVPDSWQFPQGGIDKGESPKEALLRELKEEIGTDKIEIIAEFPEWVSYDFPKKIAKKMYPYDGQTQKYFLVKLKPEAKIDLDTKEPEFNDYKFVPYKDLFHYVTFFKRPVYKKVLEYFKKEGYF</sequence>
<accession>A6Q441</accession>
<name>RPPH_NITSB</name>
<proteinExistence type="inferred from homology"/>
<protein>
    <recommendedName>
        <fullName evidence="1">RNA pyrophosphohydrolase</fullName>
        <ecNumber evidence="1">3.6.1.-</ecNumber>
    </recommendedName>
    <alternativeName>
        <fullName evidence="1">(Di)nucleoside polyphosphate hydrolase</fullName>
    </alternativeName>
</protein>